<organism>
    <name type="scientific">Pseudomonas putida (strain DOT-T1E)</name>
    <dbReference type="NCBI Taxonomy" id="1196325"/>
    <lineage>
        <taxon>Bacteria</taxon>
        <taxon>Pseudomonadati</taxon>
        <taxon>Pseudomonadota</taxon>
        <taxon>Gammaproteobacteria</taxon>
        <taxon>Pseudomonadales</taxon>
        <taxon>Pseudomonadaceae</taxon>
        <taxon>Pseudomonas</taxon>
    </lineage>
</organism>
<feature type="chain" id="PRO_0000423590" description="Sensor histidine kinase TodS">
    <location>
        <begin position="1"/>
        <end position="978"/>
    </location>
</feature>
<feature type="domain" description="PAS 1" evidence="2">
    <location>
        <begin position="32"/>
        <end position="103"/>
    </location>
</feature>
<feature type="domain" description="PAC 1" evidence="3">
    <location>
        <begin position="108"/>
        <end position="162"/>
    </location>
</feature>
<feature type="domain" description="Histidine kinase 1" evidence="1">
    <location>
        <begin position="187"/>
        <end position="405"/>
    </location>
</feature>
<feature type="domain" description="Response regulatory" evidence="4">
    <location>
        <begin position="452"/>
        <end position="567"/>
    </location>
</feature>
<feature type="domain" description="PAS 2" evidence="2">
    <location>
        <begin position="611"/>
        <end position="681"/>
    </location>
</feature>
<feature type="domain" description="PAC 2" evidence="3">
    <location>
        <begin position="685"/>
        <end position="737"/>
    </location>
</feature>
<feature type="domain" description="Histidine kinase 2" evidence="1">
    <location>
        <begin position="757"/>
        <end position="974"/>
    </location>
</feature>
<feature type="modified residue" description="Phosphohistidine; by autocatalysis" evidence="10">
    <location>
        <position position="190"/>
    </location>
</feature>
<feature type="modified residue" description="4-aspartylphosphate" evidence="10">
    <location>
        <position position="500"/>
    </location>
</feature>
<feature type="modified residue" description="Phosphohistidine" evidence="10">
    <location>
        <position position="760"/>
    </location>
</feature>
<feature type="mutagenesis site" description="Decreases affinity for agonists and antagonists." evidence="6">
    <original>F</original>
    <variation>A</variation>
    <location>
        <position position="46"/>
    </location>
</feature>
<feature type="mutagenesis site" description="Decreases affinity for agonists and antagonists." evidence="6">
    <original>I</original>
    <variation>A</variation>
    <location>
        <position position="74"/>
    </location>
</feature>
<feature type="mutagenesis site" description="Does not bind agonists and antagonists. Does not stimulate autophosphorylation and transcription of target genes." evidence="6">
    <original>F</original>
    <variation>A</variation>
    <location>
        <position position="79"/>
    </location>
</feature>
<feature type="mutagenesis site" description="Decreases affinity for agonists and antagonists." evidence="6">
    <original>I</original>
    <variation>A</variation>
    <location>
        <position position="114"/>
    </location>
</feature>
<feature type="mutagenesis site" description="Strong decrease in TodT phosphorylation." evidence="7">
    <original>H</original>
    <variation>A</variation>
    <location>
        <position position="190"/>
    </location>
</feature>
<feature type="mutagenesis site" description="Strong decrease in TodT phosphorylation." evidence="7">
    <original>D</original>
    <variation>A</variation>
    <location>
        <position position="500"/>
    </location>
</feature>
<feature type="mutagenesis site" description="Lack of TodT phosphorylation." evidence="7">
    <original>H</original>
    <variation>A</variation>
    <location>
        <position position="760"/>
    </location>
</feature>
<evidence type="ECO:0000255" key="1">
    <source>
        <dbReference type="PROSITE-ProRule" id="PRU00107"/>
    </source>
</evidence>
<evidence type="ECO:0000255" key="2">
    <source>
        <dbReference type="PROSITE-ProRule" id="PRU00140"/>
    </source>
</evidence>
<evidence type="ECO:0000255" key="3">
    <source>
        <dbReference type="PROSITE-ProRule" id="PRU00141"/>
    </source>
</evidence>
<evidence type="ECO:0000255" key="4">
    <source>
        <dbReference type="PROSITE-ProRule" id="PRU00169"/>
    </source>
</evidence>
<evidence type="ECO:0000269" key="5">
    <source>
    </source>
</evidence>
<evidence type="ECO:0000269" key="6">
    <source>
    </source>
</evidence>
<evidence type="ECO:0000269" key="7">
    <source>
    </source>
</evidence>
<evidence type="ECO:0000269" key="8">
    <source>
    </source>
</evidence>
<evidence type="ECO:0000269" key="9">
    <source>
    </source>
</evidence>
<evidence type="ECO:0000305" key="10"/>
<proteinExistence type="evidence at protein level"/>
<protein>
    <recommendedName>
        <fullName>Sensor histidine kinase TodS</fullName>
        <ecNumber>2.7.13.3</ecNumber>
    </recommendedName>
</protein>
<reference key="1">
    <citation type="journal article" date="1999" name="Gene">
        <title>Toluene metabolism by the solvent-tolerant Pseudomonas putida DOT-T1 strain, and its role in solvent impermeabilization.</title>
        <authorList>
            <person name="Mosqueda G."/>
            <person name="Ramos-Gonzalez M.I."/>
            <person name="Ramos J.L."/>
        </authorList>
    </citation>
    <scope>NUCLEOTIDE SEQUENCE [GENOMIC DNA]</scope>
    <source>
        <strain>DOT-T1E</strain>
    </source>
</reference>
<reference key="2">
    <citation type="journal article" date="2013" name="Microb. Biotechnol.">
        <title>Metabolic potential of the organic-solvent tolerant Pseudomonas putida DOT-T1E deduced from its annotated genome.</title>
        <authorList>
            <person name="Udaondo Z."/>
            <person name="Molina L."/>
            <person name="Daniels C."/>
            <person name="Gomez M.J."/>
            <person name="Molina-Henares M.A."/>
            <person name="Matilla M.A."/>
            <person name="Roca A."/>
            <person name="Fernandez M."/>
            <person name="Duque E."/>
            <person name="Segura A."/>
            <person name="Ramos J.L."/>
        </authorList>
    </citation>
    <scope>NUCLEOTIDE SEQUENCE [LARGE SCALE GENOMIC DNA]</scope>
    <source>
        <strain>DOT-T1E</strain>
    </source>
</reference>
<reference key="3">
    <citation type="journal article" date="2006" name="Proc. Natl. Acad. Sci. U.S.A.">
        <title>The TodS-TodT two-component regulatory system recognizes a wide range of effectors and works with DNA-bending proteins.</title>
        <authorList>
            <person name="Lacal J."/>
            <person name="Busch A."/>
            <person name="Guazzaroni M.E."/>
            <person name="Krell T."/>
            <person name="Ramos J.L."/>
        </authorList>
    </citation>
    <scope>FUNCTION</scope>
    <scope>CATALYTIC ACTIVITY</scope>
    <scope>DOMAIN</scope>
    <scope>AUTOPHOSPHORYLATION</scope>
    <source>
        <strain>DOT-T1E</strain>
    </source>
</reference>
<reference key="4">
    <citation type="journal article" date="2007" name="Proc. Natl. Acad. Sci. U.S.A.">
        <title>Bacterial sensor kinase TodS interacts with agonistic and antagonistic signals.</title>
        <authorList>
            <person name="Busch A."/>
            <person name="Lacal J."/>
            <person name="Martos A."/>
            <person name="Ramos J.L."/>
            <person name="Krell T."/>
        </authorList>
    </citation>
    <scope>ACTIVITY REGULATION</scope>
    <scope>AUTOPHOSPHORYLATION</scope>
    <scope>MUTAGENESIS OF PHE-46; ILE-74; PHE-79 AND ILE-114</scope>
    <source>
        <strain>DOT-T1E</strain>
    </source>
</reference>
<reference key="5">
    <citation type="journal article" date="2009" name="J. Biol. Chem.">
        <title>The sensor kinase TodS operates by a multiple step phosphorelay mechanism involving two autokinase domains.</title>
        <authorList>
            <person name="Busch A."/>
            <person name="Guazzaroni M.E."/>
            <person name="Lacal J."/>
            <person name="Ramos J.L."/>
            <person name="Krell T."/>
        </authorList>
    </citation>
    <scope>FUNCTION</scope>
    <scope>CATALYTIC ACTIVITY</scope>
    <scope>ACTIVITY REGULATION</scope>
    <scope>AUTOPHOSPHORYLATION</scope>
    <scope>PHOSPHORELAY</scope>
    <scope>DOMAIN</scope>
    <scope>MUTAGENESIS OF HIS-190; ASP-500 AND HIS-760</scope>
    <source>
        <strain>DOT-T1E</strain>
    </source>
</reference>
<reference key="6">
    <citation type="journal article" date="2010" name="J. Bacteriol.">
        <title>Catabolite repression of the TodS/TodT two-component system and effector-dependent transphosphorylation of TodT as the basis for toluene dioxygenase catabolic pathway control.</title>
        <authorList>
            <person name="Busch A."/>
            <person name="Lacal J."/>
            <person name="Silva-Jimenez H."/>
            <person name="Krell T."/>
            <person name="Ramos J.L."/>
        </authorList>
    </citation>
    <scope>INDUCTION</scope>
    <source>
        <strain>DOT-T1E</strain>
    </source>
</reference>
<reference key="7">
    <citation type="journal article" date="2012" name="Microb. Biotechnol.">
        <title>Study of the TmoS/TmoT two-component system: towards the functional characterization of the family of TodS/TodT like systems.</title>
        <authorList>
            <person name="Silva-Jimenez H."/>
            <person name="Garcia-Fontana C."/>
            <person name="Cadirci B.H."/>
            <person name="Ramos-Gonzalez M.I."/>
            <person name="Ramos J.L."/>
            <person name="Krell T."/>
        </authorList>
    </citation>
    <scope>FUNCTION</scope>
    <scope>ACTIVITY REGULATION</scope>
    <scope>SUBCELLULAR LOCATION</scope>
    <source>
        <strain>DOT-T1E</strain>
    </source>
</reference>
<sequence length="978" mass="108018">MSSLDRKKPQNRSKNNYYNICLKEKGSEELTCEEHARIIFDGLYEFVGLLDAHGNVLEVNQVALEGAGITLEEIRGKPFWKARWWQISKKTEATQKRLVETASSGEFVRCDVEILGKSGGREVIAVDFSLLPICNEEGSIVYLLAEGRNITDKKKAEAMLALKNQELEQSVERIRKLDNAKSDFFAKVSHELRTPLSLILGPLEAVMAAEAGRESPYWKQFEVIQRNAMTLLKQVNTLLDLAKMDARQMGLSYRRANLSQLTRTISSNFEGIAQQKSITFDTKLPVQMVAEVDCEKYERIILNLLSNAFKFTPDGGLIRCCLSLSRPNYALVTVSDSGPGIPPALRKEIFERFHQLSQEGQQATRGTGLGLSIVKEFVELHRGTISVSDAPGGGALFQVKLPLNAPEGAYVASNTAPRRDNPQVVDTDEYLLLAPNAENEAEVLPFQSDQPRVLIVEDNPDMRGFIKDCLSSDYQVYVAPDGAKALELMSNMPPDLLITDLMMPVMSGDMLVHQVRKKNELSHIPIMVLSAKSDAELRVKLLSESVQDFLLKPFSAHELRARVSNLVSMKVAGDALRKELSDQGDDIAILTHRLIKSRHRLQQSNIALSASEARWKAVYENSAAGIVLTDPENRILNANPAFQRITGYGEKDLEGLSMEQLTPSDESPQIKQRLANLLQGGGAEYSVERSYLCKNGSTIWANASVSLMPQRVGESPVILQIIDDITEKKQAQENLNQLQQQLVYVSRSATMGEFAAYIAHEINQPLSAIMTNANAGTRWLGNEPSNIPEAKEALARIIRDSDRAAEIIRMVRSFLKRQETVLKPIDLKALVTDTSLILKAPSQNNSVNLDVVADDELPEIWGDGVQIQQLIINLAMNAIEAISQADCETRQLTLSFSGNDTGDALVISVKDTGPGISERQMAQLFNAFYTTKKEGLGMGLAICLTITEVHNGKIWVECPPAGGACFLVSIPARQGSGT</sequence>
<dbReference type="EC" id="2.7.13.3"/>
<dbReference type="EMBL" id="GQ884177">
    <property type="protein sequence ID" value="ADI95406.1"/>
    <property type="molecule type" value="Genomic_DNA"/>
</dbReference>
<dbReference type="EMBL" id="CP003734">
    <property type="protein sequence ID" value="AFO50104.1"/>
    <property type="status" value="ALT_SEQ"/>
    <property type="molecule type" value="Genomic_DNA"/>
</dbReference>
<dbReference type="EMBL" id="CP003734">
    <property type="protein sequence ID" value="AFO50105.1"/>
    <property type="status" value="ALT_SEQ"/>
    <property type="molecule type" value="Genomic_DNA"/>
</dbReference>
<dbReference type="SMR" id="E0X9C7"/>
<dbReference type="DIP" id="DIP-61171N"/>
<dbReference type="IntAct" id="E0X9C7">
    <property type="interactions" value="1"/>
</dbReference>
<dbReference type="KEGG" id="ppx:T1E_4275"/>
<dbReference type="KEGG" id="ppx:T1E_4276"/>
<dbReference type="PATRIC" id="fig|1196325.3.peg.4232"/>
<dbReference type="HOGENOM" id="CLU_000445_89_2_6"/>
<dbReference type="Proteomes" id="UP000006503">
    <property type="component" value="Chromosome"/>
</dbReference>
<dbReference type="GO" id="GO:0005737">
    <property type="term" value="C:cytoplasm"/>
    <property type="evidence" value="ECO:0007669"/>
    <property type="project" value="UniProtKB-SubCell"/>
</dbReference>
<dbReference type="GO" id="GO:0005524">
    <property type="term" value="F:ATP binding"/>
    <property type="evidence" value="ECO:0007669"/>
    <property type="project" value="UniProtKB-KW"/>
</dbReference>
<dbReference type="GO" id="GO:0042802">
    <property type="term" value="F:identical protein binding"/>
    <property type="evidence" value="ECO:0000353"/>
    <property type="project" value="IntAct"/>
</dbReference>
<dbReference type="GO" id="GO:0000155">
    <property type="term" value="F:phosphorelay sensor kinase activity"/>
    <property type="evidence" value="ECO:0007669"/>
    <property type="project" value="InterPro"/>
</dbReference>
<dbReference type="CDD" id="cd16925">
    <property type="entry name" value="HATPase_TutC-TodS-like"/>
    <property type="match status" value="1"/>
</dbReference>
<dbReference type="CDD" id="cd00082">
    <property type="entry name" value="HisKA"/>
    <property type="match status" value="2"/>
</dbReference>
<dbReference type="CDD" id="cd00130">
    <property type="entry name" value="PAS"/>
    <property type="match status" value="2"/>
</dbReference>
<dbReference type="CDD" id="cd00156">
    <property type="entry name" value="REC"/>
    <property type="match status" value="1"/>
</dbReference>
<dbReference type="FunFam" id="3.30.565.10:FF:000037">
    <property type="entry name" value="Hybrid sensor histidine kinase/response regulator"/>
    <property type="match status" value="1"/>
</dbReference>
<dbReference type="FunFam" id="3.40.50.2300:FF:000121">
    <property type="entry name" value="Sensor histidine kinase RcsC"/>
    <property type="match status" value="1"/>
</dbReference>
<dbReference type="FunFam" id="3.30.450.20:FF:000155">
    <property type="entry name" value="Sensor histidine kinase TodS"/>
    <property type="match status" value="1"/>
</dbReference>
<dbReference type="FunFam" id="1.10.287.130:FF:000055">
    <property type="entry name" value="Two-component sensor histidine kinase"/>
    <property type="match status" value="1"/>
</dbReference>
<dbReference type="FunFam" id="3.30.565.10:FF:000042">
    <property type="entry name" value="Two-component sensor histidine kinase KdpD"/>
    <property type="match status" value="1"/>
</dbReference>
<dbReference type="FunFam" id="1.10.287.130:FF:000045">
    <property type="entry name" value="Two-component system sensor histidine kinase/response regulator"/>
    <property type="match status" value="1"/>
</dbReference>
<dbReference type="Gene3D" id="1.10.287.130">
    <property type="match status" value="2"/>
</dbReference>
<dbReference type="Gene3D" id="3.40.50.2300">
    <property type="match status" value="1"/>
</dbReference>
<dbReference type="Gene3D" id="3.30.565.10">
    <property type="entry name" value="Histidine kinase-like ATPase, C-terminal domain"/>
    <property type="match status" value="2"/>
</dbReference>
<dbReference type="Gene3D" id="3.30.450.20">
    <property type="entry name" value="PAS domain"/>
    <property type="match status" value="2"/>
</dbReference>
<dbReference type="InterPro" id="IPR011006">
    <property type="entry name" value="CheY-like_superfamily"/>
</dbReference>
<dbReference type="InterPro" id="IPR036890">
    <property type="entry name" value="HATPase_C_sf"/>
</dbReference>
<dbReference type="InterPro" id="IPR005467">
    <property type="entry name" value="His_kinase_dom"/>
</dbReference>
<dbReference type="InterPro" id="IPR003661">
    <property type="entry name" value="HisK_dim/P_dom"/>
</dbReference>
<dbReference type="InterPro" id="IPR036097">
    <property type="entry name" value="HisK_dim/P_sf"/>
</dbReference>
<dbReference type="InterPro" id="IPR001610">
    <property type="entry name" value="PAC"/>
</dbReference>
<dbReference type="InterPro" id="IPR000014">
    <property type="entry name" value="PAS"/>
</dbReference>
<dbReference type="InterPro" id="IPR000700">
    <property type="entry name" value="PAS-assoc_C"/>
</dbReference>
<dbReference type="InterPro" id="IPR035965">
    <property type="entry name" value="PAS-like_dom_sf"/>
</dbReference>
<dbReference type="InterPro" id="IPR013656">
    <property type="entry name" value="PAS_4"/>
</dbReference>
<dbReference type="InterPro" id="IPR004358">
    <property type="entry name" value="Sig_transdc_His_kin-like_C"/>
</dbReference>
<dbReference type="InterPro" id="IPR001789">
    <property type="entry name" value="Sig_transdc_resp-reg_receiver"/>
</dbReference>
<dbReference type="NCBIfam" id="TIGR00229">
    <property type="entry name" value="sensory_box"/>
    <property type="match status" value="2"/>
</dbReference>
<dbReference type="PANTHER" id="PTHR43547:SF2">
    <property type="entry name" value="HYBRID SIGNAL TRANSDUCTION HISTIDINE KINASE C"/>
    <property type="match status" value="1"/>
</dbReference>
<dbReference type="PANTHER" id="PTHR43547">
    <property type="entry name" value="TWO-COMPONENT HISTIDINE KINASE"/>
    <property type="match status" value="1"/>
</dbReference>
<dbReference type="Pfam" id="PF02518">
    <property type="entry name" value="HATPase_c"/>
    <property type="match status" value="2"/>
</dbReference>
<dbReference type="Pfam" id="PF00512">
    <property type="entry name" value="HisKA"/>
    <property type="match status" value="2"/>
</dbReference>
<dbReference type="Pfam" id="PF08448">
    <property type="entry name" value="PAS_4"/>
    <property type="match status" value="1"/>
</dbReference>
<dbReference type="Pfam" id="PF13426">
    <property type="entry name" value="PAS_9"/>
    <property type="match status" value="1"/>
</dbReference>
<dbReference type="Pfam" id="PF00072">
    <property type="entry name" value="Response_reg"/>
    <property type="match status" value="1"/>
</dbReference>
<dbReference type="PRINTS" id="PR00344">
    <property type="entry name" value="BCTRLSENSOR"/>
</dbReference>
<dbReference type="SMART" id="SM00387">
    <property type="entry name" value="HATPase_c"/>
    <property type="match status" value="2"/>
</dbReference>
<dbReference type="SMART" id="SM00388">
    <property type="entry name" value="HisKA"/>
    <property type="match status" value="2"/>
</dbReference>
<dbReference type="SMART" id="SM00086">
    <property type="entry name" value="PAC"/>
    <property type="match status" value="2"/>
</dbReference>
<dbReference type="SMART" id="SM00091">
    <property type="entry name" value="PAS"/>
    <property type="match status" value="2"/>
</dbReference>
<dbReference type="SMART" id="SM00448">
    <property type="entry name" value="REC"/>
    <property type="match status" value="1"/>
</dbReference>
<dbReference type="SUPFAM" id="SSF55874">
    <property type="entry name" value="ATPase domain of HSP90 chaperone/DNA topoisomerase II/histidine kinase"/>
    <property type="match status" value="2"/>
</dbReference>
<dbReference type="SUPFAM" id="SSF52172">
    <property type="entry name" value="CheY-like"/>
    <property type="match status" value="1"/>
</dbReference>
<dbReference type="SUPFAM" id="SSF47384">
    <property type="entry name" value="Homodimeric domain of signal transducing histidine kinase"/>
    <property type="match status" value="2"/>
</dbReference>
<dbReference type="SUPFAM" id="SSF55785">
    <property type="entry name" value="PYP-like sensor domain (PAS domain)"/>
    <property type="match status" value="2"/>
</dbReference>
<dbReference type="PROSITE" id="PS50109">
    <property type="entry name" value="HIS_KIN"/>
    <property type="match status" value="2"/>
</dbReference>
<dbReference type="PROSITE" id="PS50113">
    <property type="entry name" value="PAC"/>
    <property type="match status" value="2"/>
</dbReference>
<dbReference type="PROSITE" id="PS50112">
    <property type="entry name" value="PAS"/>
    <property type="match status" value="2"/>
</dbReference>
<dbReference type="PROSITE" id="PS50110">
    <property type="entry name" value="RESPONSE_REGULATORY"/>
    <property type="match status" value="1"/>
</dbReference>
<keyword id="KW-0067">ATP-binding</keyword>
<keyword id="KW-0963">Cytoplasm</keyword>
<keyword id="KW-0418">Kinase</keyword>
<keyword id="KW-0547">Nucleotide-binding</keyword>
<keyword id="KW-0597">Phosphoprotein</keyword>
<keyword id="KW-0677">Repeat</keyword>
<keyword id="KW-0808">Transferase</keyword>
<keyword id="KW-0902">Two-component regulatory system</keyword>
<comment type="function">
    <text evidence="5 7 9">Member of the two-component regulatory system TodS/TodT involved in the regulation of toluene degradation. Phosphorylates TodT via a four-step phosphorelay in response to toluene. Can also be induced by benzene and ethylbenzene.</text>
</comment>
<comment type="catalytic activity">
    <reaction evidence="5 7">
        <text>ATP + protein L-histidine = ADP + protein N-phospho-L-histidine.</text>
        <dbReference type="EC" id="2.7.13.3"/>
    </reaction>
</comment>
<comment type="activity regulation">
    <text evidence="6 7 9">Activity is regulated by agonists and antagonists. Binding of agonists such as toluene or benzene to TodS stimulates autophosphorylation at His-190. Activity is inhibited by antagonists such as o-xylene, o-chlorotoluene and trimethylbenzene isomers, which bind to TodS but do not stimulate autophosphorylation. Agonists and antagonists bind to the same PAS domain.</text>
</comment>
<comment type="interaction">
    <interactant intactId="EBI-15583094">
        <id>E0X9C7</id>
    </interactant>
    <interactant intactId="EBI-15583094">
        <id>E0X9C7</id>
        <label>todS</label>
    </interactant>
    <organismsDiffer>false</organismsDiffer>
    <experiments>2</experiments>
</comment>
<comment type="subcellular location">
    <subcellularLocation>
        <location evidence="9">Cytoplasm</location>
    </subcellularLocation>
</comment>
<comment type="induction">
    <text evidence="8">Constitutively expressed. Is under catabolite repression.</text>
</comment>
<comment type="domain">
    <text evidence="5 7">Toluene binds to the N-terminal PAS sensor domain but not to the C-terminal PAS domain. The two PAS sensor domains may sense two different signals.</text>
</comment>
<comment type="PTM">
    <text>Autophosphorylated. Activation requires a sequential transfer of a phosphate group from a His in the primary transmitter domain, to an Asp in the receiver domain and to a His in the secondary transmitter domain.</text>
</comment>
<comment type="sequence caution" evidence="10">
    <conflict type="erroneous initiation">
        <sequence resource="EMBL-CDS" id="AFO50104"/>
    </conflict>
    <text>Extended N-terminus.</text>
</comment>
<comment type="sequence caution" evidence="10">
    <conflict type="frameshift">
        <sequence resource="EMBL-CDS" id="AFO50104"/>
    </conflict>
</comment>
<comment type="sequence caution" evidence="10">
    <conflict type="erroneous initiation">
        <sequence resource="EMBL-CDS" id="AFO50105"/>
    </conflict>
    <text>Truncated N-terminus.</text>
</comment>
<comment type="sequence caution" evidence="10">
    <conflict type="frameshift">
        <sequence resource="EMBL-CDS" id="AFO50105"/>
    </conflict>
</comment>
<accession>E0X9C7</accession>
<accession>I7B4U5</accession>
<accession>I7CDZ1</accession>
<gene>
    <name type="primary">todS</name>
    <name type="synonym">dhkD</name>
    <name type="ordered locus">T1E_4275/T1E_4276</name>
</gene>
<name>TODS_PSEPT</name>